<sequence>DDIKLSQQYDVLDLFKYMHQ</sequence>
<keyword id="KW-1003">Cell membrane</keyword>
<keyword id="KW-0903">Direct protein sequencing</keyword>
<keyword id="KW-0297">G-protein coupled receptor</keyword>
<keyword id="KW-0472">Membrane</keyword>
<keyword id="KW-0675">Receptor</keyword>
<keyword id="KW-0807">Transducer</keyword>
<proteinExistence type="evidence at protein level"/>
<evidence type="ECO:0000305" key="1"/>
<dbReference type="PIR" id="S28779">
    <property type="entry name" value="S28779"/>
</dbReference>
<dbReference type="GO" id="GO:0005886">
    <property type="term" value="C:plasma membrane"/>
    <property type="evidence" value="ECO:0007669"/>
    <property type="project" value="UniProtKB-SubCell"/>
</dbReference>
<dbReference type="GO" id="GO:0004930">
    <property type="term" value="F:G protein-coupled receptor activity"/>
    <property type="evidence" value="ECO:0007669"/>
    <property type="project" value="UniProtKB-KW"/>
</dbReference>
<reference key="1">
    <citation type="journal article" date="1989" name="FEBS Lett.">
        <title>Isolation and N-terminal amino acid sequence of an octopamine ligand binding protein.</title>
        <authorList>
            <person name="Nathanson J.A."/>
            <person name="Kantham L."/>
            <person name="Hunnicutt E.J."/>
        </authorList>
    </citation>
    <scope>PROTEIN SEQUENCE</scope>
    <source>
        <tissue>Light organ</tissue>
    </source>
</reference>
<name>OAR_PHOPY</name>
<feature type="chain" id="PRO_0000069958" description="Octopamine receptor">
    <location>
        <begin position="1"/>
        <end position="20" status="greater than"/>
    </location>
</feature>
<feature type="unsure residue">
    <location>
        <position position="2"/>
    </location>
</feature>
<feature type="unsure residue">
    <location>
        <position position="9"/>
    </location>
</feature>
<feature type="unsure residue">
    <location>
        <position position="19"/>
    </location>
</feature>
<feature type="non-terminal residue">
    <location>
        <position position="20"/>
    </location>
</feature>
<organism>
    <name type="scientific">Photinus pyralis</name>
    <name type="common">Common eastern firefly</name>
    <name type="synonym">Lampyris pyralis</name>
    <dbReference type="NCBI Taxonomy" id="7054"/>
    <lineage>
        <taxon>Eukaryota</taxon>
        <taxon>Metazoa</taxon>
        <taxon>Ecdysozoa</taxon>
        <taxon>Arthropoda</taxon>
        <taxon>Hexapoda</taxon>
        <taxon>Insecta</taxon>
        <taxon>Pterygota</taxon>
        <taxon>Neoptera</taxon>
        <taxon>Endopterygota</taxon>
        <taxon>Coleoptera</taxon>
        <taxon>Polyphaga</taxon>
        <taxon>Elateriformia</taxon>
        <taxon>Elateroidea</taxon>
        <taxon>Lampyridae</taxon>
        <taxon>Lampyrinae</taxon>
        <taxon>Photinus</taxon>
    </lineage>
</organism>
<comment type="function">
    <text>Putative receptor for octopamine. Octopamine (OA) is a neurotransmitter, neurohormone, and neuromodulator in invertebrates. The activity of this receptor is mediated by G proteins which activate adenylyl cyclase.</text>
</comment>
<comment type="subcellular location">
    <subcellularLocation>
        <location>Cell membrane</location>
        <topology>Multi-pass membrane protein</topology>
    </subcellularLocation>
</comment>
<comment type="similarity">
    <text evidence="1">Belongs to the G-protein coupled receptor 1 family.</text>
</comment>
<accession>P14803</accession>
<protein>
    <recommendedName>
        <fullName>Octopamine receptor</fullName>
    </recommendedName>
    <alternativeName>
        <fullName>Octopamine-binding protein</fullName>
    </alternativeName>
</protein>